<accession>P18761</accession>
<accession>B1ARR5</accession>
<accession>O88625</accession>
<evidence type="ECO:0000250" key="1">
    <source>
        <dbReference type="UniProtKB" id="P00918"/>
    </source>
</evidence>
<evidence type="ECO:0000250" key="2">
    <source>
        <dbReference type="UniProtKB" id="P23280"/>
    </source>
</evidence>
<evidence type="ECO:0000250" key="3">
    <source>
        <dbReference type="UniProtKB" id="P23589"/>
    </source>
</evidence>
<evidence type="ECO:0000255" key="4"/>
<evidence type="ECO:0000255" key="5">
    <source>
        <dbReference type="PROSITE-ProRule" id="PRU01134"/>
    </source>
</evidence>
<evidence type="ECO:0000269" key="6">
    <source>
    </source>
</evidence>
<evidence type="ECO:0000305" key="7"/>
<protein>
    <recommendedName>
        <fullName>Carbonic anhydrase 6</fullName>
        <ecNumber>4.2.1.1</ecNumber>
    </recommendedName>
    <alternativeName>
        <fullName>Carbonate dehydratase VI</fullName>
    </alternativeName>
    <alternativeName>
        <fullName>Carbonic anhydrase VI</fullName>
        <shortName>CA-VI</shortName>
    </alternativeName>
    <alternativeName>
        <fullName>Salivary carbonic anhydrase</fullName>
    </alternativeName>
    <alternativeName>
        <fullName>Secreted carbonic anhydrase</fullName>
    </alternativeName>
</protein>
<reference key="1">
    <citation type="journal article" date="1999" name="Mol. Cell. Biol.">
        <title>CHOP-dependent stress-inducible expression of a novel form of carbonic anhydrase VI.</title>
        <authorList>
            <person name="Sok J."/>
            <person name="Wang X.Z."/>
            <person name="Batchvarova N."/>
            <person name="Kuroda M."/>
            <person name="Harding H."/>
            <person name="Ron D."/>
        </authorList>
    </citation>
    <scope>NUCLEOTIDE SEQUENCE [MRNA]</scope>
    <source>
        <strain>CD-1</strain>
        <tissue>Salivary gland</tissue>
    </source>
</reference>
<reference key="2">
    <citation type="journal article" date="2009" name="PLoS Biol.">
        <title>Lineage-specific biology revealed by a finished genome assembly of the mouse.</title>
        <authorList>
            <person name="Church D.M."/>
            <person name="Goodstadt L."/>
            <person name="Hillier L.W."/>
            <person name="Zody M.C."/>
            <person name="Goldstein S."/>
            <person name="She X."/>
            <person name="Bult C.J."/>
            <person name="Agarwala R."/>
            <person name="Cherry J.L."/>
            <person name="DiCuccio M."/>
            <person name="Hlavina W."/>
            <person name="Kapustin Y."/>
            <person name="Meric P."/>
            <person name="Maglott D."/>
            <person name="Birtle Z."/>
            <person name="Marques A.C."/>
            <person name="Graves T."/>
            <person name="Zhou S."/>
            <person name="Teague B."/>
            <person name="Potamousis K."/>
            <person name="Churas C."/>
            <person name="Place M."/>
            <person name="Herschleb J."/>
            <person name="Runnheim R."/>
            <person name="Forrest D."/>
            <person name="Amos-Landgraf J."/>
            <person name="Schwartz D.C."/>
            <person name="Cheng Z."/>
            <person name="Lindblad-Toh K."/>
            <person name="Eichler E.E."/>
            <person name="Ponting C.P."/>
        </authorList>
    </citation>
    <scope>NUCLEOTIDE SEQUENCE [LARGE SCALE GENOMIC DNA]</scope>
    <source>
        <strain>C57BL/6J</strain>
    </source>
</reference>
<reference key="3">
    <citation type="submission" date="2005-07" db="EMBL/GenBank/DDBJ databases">
        <authorList>
            <person name="Mural R.J."/>
            <person name="Adams M.D."/>
            <person name="Myers E.W."/>
            <person name="Smith H.O."/>
            <person name="Venter J.C."/>
        </authorList>
    </citation>
    <scope>NUCLEOTIDE SEQUENCE [LARGE SCALE GENOMIC DNA]</scope>
</reference>
<reference key="4">
    <citation type="journal article" date="1989" name="Biochem. J.">
        <title>Tissue and species distribution of the secreted carbonic anhydrase isoenzyme.</title>
        <authorList>
            <person name="Fernley R.T."/>
            <person name="Darling P."/>
            <person name="Aldred P."/>
            <person name="Wright R.D."/>
            <person name="Coghlan J.P."/>
        </authorList>
    </citation>
    <scope>PROTEIN SEQUENCE OF 18-38</scope>
</reference>
<keyword id="KW-0903">Direct protein sequencing</keyword>
<keyword id="KW-1015">Disulfide bond</keyword>
<keyword id="KW-0325">Glycoprotein</keyword>
<keyword id="KW-0456">Lyase</keyword>
<keyword id="KW-0479">Metal-binding</keyword>
<keyword id="KW-1185">Reference proteome</keyword>
<keyword id="KW-0964">Secreted</keyword>
<keyword id="KW-0732">Signal</keyword>
<keyword id="KW-0862">Zinc</keyword>
<feature type="signal peptide" evidence="6">
    <location>
        <begin position="1"/>
        <end position="17"/>
    </location>
</feature>
<feature type="chain" id="PRO_0000004242" description="Carbonic anhydrase 6">
    <location>
        <begin position="18"/>
        <end position="317"/>
    </location>
</feature>
<feature type="domain" description="Alpha-carbonic anhydrase" evidence="5">
    <location>
        <begin position="19"/>
        <end position="277"/>
    </location>
</feature>
<feature type="active site" description="Proton donor/acceptor" evidence="1">
    <location>
        <position position="84"/>
    </location>
</feature>
<feature type="binding site" evidence="2">
    <location>
        <position position="110"/>
    </location>
    <ligand>
        <name>Zn(2+)</name>
        <dbReference type="ChEBI" id="CHEBI:29105"/>
        <note>catalytic</note>
    </ligand>
</feature>
<feature type="binding site" evidence="2">
    <location>
        <position position="112"/>
    </location>
    <ligand>
        <name>Zn(2+)</name>
        <dbReference type="ChEBI" id="CHEBI:29105"/>
        <note>catalytic</note>
    </ligand>
</feature>
<feature type="binding site" evidence="2">
    <location>
        <position position="137"/>
    </location>
    <ligand>
        <name>Zn(2+)</name>
        <dbReference type="ChEBI" id="CHEBI:29105"/>
        <note>catalytic</note>
    </ligand>
</feature>
<feature type="binding site" evidence="1">
    <location>
        <begin position="219"/>
        <end position="220"/>
    </location>
    <ligand>
        <name>substrate</name>
    </ligand>
</feature>
<feature type="glycosylation site" description="N-linked (GlcNAc...) asparagine" evidence="4">
    <location>
        <position position="255"/>
    </location>
</feature>
<feature type="disulfide bond" evidence="4">
    <location>
        <begin position="41"/>
        <end position="223"/>
    </location>
</feature>
<feature type="sequence conflict" description="In Ref. 4; AA sequence." evidence="7" ref="4">
    <original>H</original>
    <variation>G</variation>
    <location>
        <position position="18"/>
    </location>
</feature>
<feature type="sequence conflict" description="In Ref. 4; AA sequence." evidence="7" ref="4">
    <original>S</original>
    <variation>T</variation>
    <location>
        <position position="35"/>
    </location>
</feature>
<feature type="sequence conflict" description="In Ref. 1; AAD12540." evidence="7" ref="1">
    <original>N</original>
    <variation>D</variation>
    <location>
        <position position="185"/>
    </location>
</feature>
<feature type="sequence conflict" description="In Ref. 1; AAD12540." evidence="7" ref="1">
    <original>N</original>
    <variation>D</variation>
    <location>
        <position position="202"/>
    </location>
</feature>
<feature type="sequence conflict" description="In Ref. 1; AAD12540." evidence="7" ref="1">
    <original>K</original>
    <variation>R</variation>
    <location>
        <position position="235"/>
    </location>
</feature>
<feature type="sequence conflict" description="In Ref. 1; AAD12540." evidence="7" ref="1">
    <original>Q</original>
    <variation>P</variation>
    <location>
        <position position="281"/>
    </location>
</feature>
<feature type="sequence conflict" description="In Ref. 1; AAD12540." evidence="7" ref="1">
    <original>L</original>
    <variation>P</variation>
    <location>
        <position position="291"/>
    </location>
</feature>
<feature type="sequence conflict" description="In Ref. 1; AAD12540." evidence="7" ref="1">
    <original>W</original>
    <variation>G</variation>
    <location>
        <position position="314"/>
    </location>
</feature>
<comment type="function">
    <text>Reversible hydration of carbon dioxide. Its role in saliva is unknown.</text>
</comment>
<comment type="catalytic activity">
    <reaction>
        <text>hydrogencarbonate + H(+) = CO2 + H2O</text>
        <dbReference type="Rhea" id="RHEA:10748"/>
        <dbReference type="ChEBI" id="CHEBI:15377"/>
        <dbReference type="ChEBI" id="CHEBI:15378"/>
        <dbReference type="ChEBI" id="CHEBI:16526"/>
        <dbReference type="ChEBI" id="CHEBI:17544"/>
        <dbReference type="EC" id="4.2.1.1"/>
    </reaction>
</comment>
<comment type="cofactor">
    <cofactor evidence="3">
        <name>Zn(2+)</name>
        <dbReference type="ChEBI" id="CHEBI:29105"/>
    </cofactor>
</comment>
<comment type="subcellular location">
    <subcellularLocation>
        <location>Secreted</location>
    </subcellularLocation>
</comment>
<comment type="tissue specificity">
    <text>Major constituent of saliva.</text>
</comment>
<comment type="similarity">
    <text evidence="7">Belongs to the alpha-carbonic anhydrase family.</text>
</comment>
<gene>
    <name type="primary">Ca6</name>
    <name type="synonym">Car6</name>
</gene>
<name>CAH6_MOUSE</name>
<proteinExistence type="evidence at protein level"/>
<sequence>MRALVSVVSLFFLGIQAHSDWSYSGDDGVGESQWSEQYPSCGGERQSPIDVKTEEVMFNPSLKPLSLVNYEKENLEFTMTNNGHTVSIDLPPSMYLETSDGTEFISKAFHFHWGGRDWELSGSEHTIDGIRSIMEAHFVHFNKEYGTYENAKDQKNGLAVLAVLFKIDEYAENTYYSDIISALKNIEKPGETTTLKDTTIRNLLPKDVHHYYTYPGSLTTPPCTENVQWFVLRDKVTLSKAQVVTIENSVMDHNNNTIQNGYRSTQPNNHRVVEANFLNVQDMYSSYHLYLKNMQKEILQPKKQKKTKKNRHFWSRK</sequence>
<dbReference type="EC" id="4.2.1.1"/>
<dbReference type="EMBL" id="AF079835">
    <property type="protein sequence ID" value="AAD12540.1"/>
    <property type="molecule type" value="mRNA"/>
</dbReference>
<dbReference type="EMBL" id="AL606903">
    <property type="status" value="NOT_ANNOTATED_CDS"/>
    <property type="molecule type" value="Genomic_DNA"/>
</dbReference>
<dbReference type="EMBL" id="CH466594">
    <property type="protein sequence ID" value="EDL14887.1"/>
    <property type="molecule type" value="Genomic_DNA"/>
</dbReference>
<dbReference type="CCDS" id="CCDS51386.1"/>
<dbReference type="PIR" id="S03863">
    <property type="entry name" value="S03863"/>
</dbReference>
<dbReference type="RefSeq" id="NP_033932.2">
    <property type="nucleotide sequence ID" value="NM_009802.2"/>
</dbReference>
<dbReference type="SMR" id="P18761"/>
<dbReference type="FunCoup" id="P18761">
    <property type="interactions" value="53"/>
</dbReference>
<dbReference type="STRING" id="10090.ENSMUSP00000030817"/>
<dbReference type="GlyCosmos" id="P18761">
    <property type="glycosylation" value="1 site, No reported glycans"/>
</dbReference>
<dbReference type="GlyGen" id="P18761">
    <property type="glycosylation" value="1 site"/>
</dbReference>
<dbReference type="PaxDb" id="10090-ENSMUSP00000030817"/>
<dbReference type="PeptideAtlas" id="P18761"/>
<dbReference type="ProteomicsDB" id="281757"/>
<dbReference type="Antibodypedia" id="27596">
    <property type="antibodies" value="350 antibodies from 29 providers"/>
</dbReference>
<dbReference type="DNASU" id="12353"/>
<dbReference type="Ensembl" id="ENSMUST00000030817.5">
    <property type="protein sequence ID" value="ENSMUSP00000030817.5"/>
    <property type="gene ID" value="ENSMUSG00000028972.12"/>
</dbReference>
<dbReference type="GeneID" id="12353"/>
<dbReference type="KEGG" id="mmu:12353"/>
<dbReference type="UCSC" id="uc008vxm.1">
    <property type="organism name" value="mouse"/>
</dbReference>
<dbReference type="AGR" id="MGI:1333786"/>
<dbReference type="CTD" id="12353"/>
<dbReference type="MGI" id="MGI:1333786">
    <property type="gene designation" value="Car6"/>
</dbReference>
<dbReference type="VEuPathDB" id="HostDB:ENSMUSG00000028972"/>
<dbReference type="eggNOG" id="KOG0382">
    <property type="taxonomic scope" value="Eukaryota"/>
</dbReference>
<dbReference type="GeneTree" id="ENSGT00940000160409"/>
<dbReference type="InParanoid" id="P18761"/>
<dbReference type="OMA" id="TEMAPHF"/>
<dbReference type="OrthoDB" id="429145at2759"/>
<dbReference type="PhylomeDB" id="P18761"/>
<dbReference type="TreeFam" id="TF316425"/>
<dbReference type="Reactome" id="R-MMU-1475029">
    <property type="pathway name" value="Reversible hydration of carbon dioxide"/>
</dbReference>
<dbReference type="BioGRID-ORCS" id="12353">
    <property type="hits" value="4 hits in 79 CRISPR screens"/>
</dbReference>
<dbReference type="ChiTaRS" id="Car6">
    <property type="organism name" value="mouse"/>
</dbReference>
<dbReference type="PRO" id="PR:P18761"/>
<dbReference type="Proteomes" id="UP000000589">
    <property type="component" value="Chromosome 4"/>
</dbReference>
<dbReference type="RNAct" id="P18761">
    <property type="molecule type" value="protein"/>
</dbReference>
<dbReference type="Bgee" id="ENSMUSG00000028972">
    <property type="expression patterns" value="Expressed in submandibular gland and 40 other cell types or tissues"/>
</dbReference>
<dbReference type="ExpressionAtlas" id="P18761">
    <property type="expression patterns" value="baseline and differential"/>
</dbReference>
<dbReference type="GO" id="GO:0005737">
    <property type="term" value="C:cytoplasm"/>
    <property type="evidence" value="ECO:0000314"/>
    <property type="project" value="MGI"/>
</dbReference>
<dbReference type="GO" id="GO:0005829">
    <property type="term" value="C:cytosol"/>
    <property type="evidence" value="ECO:0000314"/>
    <property type="project" value="MGI"/>
</dbReference>
<dbReference type="GO" id="GO:0005615">
    <property type="term" value="C:extracellular space"/>
    <property type="evidence" value="ECO:0000314"/>
    <property type="project" value="MGI"/>
</dbReference>
<dbReference type="GO" id="GO:0004089">
    <property type="term" value="F:carbonate dehydratase activity"/>
    <property type="evidence" value="ECO:0007669"/>
    <property type="project" value="UniProtKB-EC"/>
</dbReference>
<dbReference type="GO" id="GO:0008270">
    <property type="term" value="F:zinc ion binding"/>
    <property type="evidence" value="ECO:0007669"/>
    <property type="project" value="InterPro"/>
</dbReference>
<dbReference type="GO" id="GO:0001580">
    <property type="term" value="P:detection of chemical stimulus involved in sensory perception of bitter taste"/>
    <property type="evidence" value="ECO:0007669"/>
    <property type="project" value="Ensembl"/>
</dbReference>
<dbReference type="CDD" id="cd03125">
    <property type="entry name" value="alpha_CA_VI"/>
    <property type="match status" value="1"/>
</dbReference>
<dbReference type="FunFam" id="3.10.200.10:FF:000003">
    <property type="entry name" value="Carbonic anhydrase 12"/>
    <property type="match status" value="1"/>
</dbReference>
<dbReference type="Gene3D" id="3.10.200.10">
    <property type="entry name" value="Alpha carbonic anhydrase"/>
    <property type="match status" value="1"/>
</dbReference>
<dbReference type="InterPro" id="IPR001148">
    <property type="entry name" value="CA_dom"/>
</dbReference>
<dbReference type="InterPro" id="IPR036398">
    <property type="entry name" value="CA_dom_sf"/>
</dbReference>
<dbReference type="InterPro" id="IPR023561">
    <property type="entry name" value="Carbonic_anhydrase_a-class"/>
</dbReference>
<dbReference type="PANTHER" id="PTHR18952">
    <property type="entry name" value="CARBONIC ANHYDRASE"/>
    <property type="match status" value="1"/>
</dbReference>
<dbReference type="PANTHER" id="PTHR18952:SF110">
    <property type="entry name" value="CARBONIC ANHYDRASE 6"/>
    <property type="match status" value="1"/>
</dbReference>
<dbReference type="Pfam" id="PF00194">
    <property type="entry name" value="Carb_anhydrase"/>
    <property type="match status" value="1"/>
</dbReference>
<dbReference type="SMART" id="SM01057">
    <property type="entry name" value="Carb_anhydrase"/>
    <property type="match status" value="1"/>
</dbReference>
<dbReference type="SUPFAM" id="SSF51069">
    <property type="entry name" value="Carbonic anhydrase"/>
    <property type="match status" value="1"/>
</dbReference>
<dbReference type="PROSITE" id="PS51144">
    <property type="entry name" value="ALPHA_CA_2"/>
    <property type="match status" value="1"/>
</dbReference>
<organism>
    <name type="scientific">Mus musculus</name>
    <name type="common">Mouse</name>
    <dbReference type="NCBI Taxonomy" id="10090"/>
    <lineage>
        <taxon>Eukaryota</taxon>
        <taxon>Metazoa</taxon>
        <taxon>Chordata</taxon>
        <taxon>Craniata</taxon>
        <taxon>Vertebrata</taxon>
        <taxon>Euteleostomi</taxon>
        <taxon>Mammalia</taxon>
        <taxon>Eutheria</taxon>
        <taxon>Euarchontoglires</taxon>
        <taxon>Glires</taxon>
        <taxon>Rodentia</taxon>
        <taxon>Myomorpha</taxon>
        <taxon>Muroidea</taxon>
        <taxon>Muridae</taxon>
        <taxon>Murinae</taxon>
        <taxon>Mus</taxon>
        <taxon>Mus</taxon>
    </lineage>
</organism>